<sequence>MAHKKGVGSSKNGRESQSKRLGVKLFGGEVAKAGNIIVRQRGTVHHPGENVGIGKDHTLYALVDGVVTFRRGKENRSFVSVKEVVAEA</sequence>
<gene>
    <name evidence="1" type="primary">rpmA</name>
    <name type="ordered locus">BDI_0309</name>
</gene>
<keyword id="KW-1185">Reference proteome</keyword>
<keyword id="KW-0687">Ribonucleoprotein</keyword>
<keyword id="KW-0689">Ribosomal protein</keyword>
<reference key="1">
    <citation type="journal article" date="2007" name="PLoS Biol.">
        <title>Evolution of symbiotic bacteria in the distal human intestine.</title>
        <authorList>
            <person name="Xu J."/>
            <person name="Mahowald M.A."/>
            <person name="Ley R.E."/>
            <person name="Lozupone C.A."/>
            <person name="Hamady M."/>
            <person name="Martens E.C."/>
            <person name="Henrissat B."/>
            <person name="Coutinho P.M."/>
            <person name="Minx P."/>
            <person name="Latreille P."/>
            <person name="Cordum H."/>
            <person name="Van Brunt A."/>
            <person name="Kim K."/>
            <person name="Fulton R.S."/>
            <person name="Fulton L.A."/>
            <person name="Clifton S.W."/>
            <person name="Wilson R.K."/>
            <person name="Knight R.D."/>
            <person name="Gordon J.I."/>
        </authorList>
    </citation>
    <scope>NUCLEOTIDE SEQUENCE [LARGE SCALE GENOMIC DNA]</scope>
    <source>
        <strain>ATCC 8503 / DSM 20701 / CIP 104284 / JCM 5825 / NCTC 11152</strain>
    </source>
</reference>
<organism>
    <name type="scientific">Parabacteroides distasonis (strain ATCC 8503 / DSM 20701 / CIP 104284 / JCM 5825 / NCTC 11152)</name>
    <dbReference type="NCBI Taxonomy" id="435591"/>
    <lineage>
        <taxon>Bacteria</taxon>
        <taxon>Pseudomonadati</taxon>
        <taxon>Bacteroidota</taxon>
        <taxon>Bacteroidia</taxon>
        <taxon>Bacteroidales</taxon>
        <taxon>Tannerellaceae</taxon>
        <taxon>Parabacteroides</taxon>
    </lineage>
</organism>
<accession>A6L8T0</accession>
<dbReference type="EMBL" id="CP000140">
    <property type="protein sequence ID" value="ABR42094.1"/>
    <property type="molecule type" value="Genomic_DNA"/>
</dbReference>
<dbReference type="RefSeq" id="WP_005861909.1">
    <property type="nucleotide sequence ID" value="NZ_LR215978.1"/>
</dbReference>
<dbReference type="SMR" id="A6L8T0"/>
<dbReference type="STRING" id="435591.BDI_0309"/>
<dbReference type="PaxDb" id="435591-BDI_0309"/>
<dbReference type="GeneID" id="93524481"/>
<dbReference type="KEGG" id="pdi:BDI_0309"/>
<dbReference type="eggNOG" id="COG0211">
    <property type="taxonomic scope" value="Bacteria"/>
</dbReference>
<dbReference type="HOGENOM" id="CLU_095424_4_0_10"/>
<dbReference type="BioCyc" id="PDIS435591:G1G5A-319-MONOMER"/>
<dbReference type="Proteomes" id="UP000000566">
    <property type="component" value="Chromosome"/>
</dbReference>
<dbReference type="GO" id="GO:0022625">
    <property type="term" value="C:cytosolic large ribosomal subunit"/>
    <property type="evidence" value="ECO:0007669"/>
    <property type="project" value="TreeGrafter"/>
</dbReference>
<dbReference type="GO" id="GO:0003735">
    <property type="term" value="F:structural constituent of ribosome"/>
    <property type="evidence" value="ECO:0007669"/>
    <property type="project" value="InterPro"/>
</dbReference>
<dbReference type="GO" id="GO:0006412">
    <property type="term" value="P:translation"/>
    <property type="evidence" value="ECO:0007669"/>
    <property type="project" value="UniProtKB-UniRule"/>
</dbReference>
<dbReference type="FunFam" id="2.40.50.100:FF:000020">
    <property type="entry name" value="50S ribosomal protein L27"/>
    <property type="match status" value="1"/>
</dbReference>
<dbReference type="Gene3D" id="2.40.50.100">
    <property type="match status" value="1"/>
</dbReference>
<dbReference type="HAMAP" id="MF_00539">
    <property type="entry name" value="Ribosomal_bL27"/>
    <property type="match status" value="1"/>
</dbReference>
<dbReference type="InterPro" id="IPR001684">
    <property type="entry name" value="Ribosomal_bL27"/>
</dbReference>
<dbReference type="InterPro" id="IPR018261">
    <property type="entry name" value="Ribosomal_bL27_CS"/>
</dbReference>
<dbReference type="NCBIfam" id="TIGR00062">
    <property type="entry name" value="L27"/>
    <property type="match status" value="1"/>
</dbReference>
<dbReference type="PANTHER" id="PTHR15893:SF0">
    <property type="entry name" value="LARGE RIBOSOMAL SUBUNIT PROTEIN BL27M"/>
    <property type="match status" value="1"/>
</dbReference>
<dbReference type="PANTHER" id="PTHR15893">
    <property type="entry name" value="RIBOSOMAL PROTEIN L27"/>
    <property type="match status" value="1"/>
</dbReference>
<dbReference type="Pfam" id="PF01016">
    <property type="entry name" value="Ribosomal_L27"/>
    <property type="match status" value="1"/>
</dbReference>
<dbReference type="PRINTS" id="PR00063">
    <property type="entry name" value="RIBOSOMALL27"/>
</dbReference>
<dbReference type="SUPFAM" id="SSF110324">
    <property type="entry name" value="Ribosomal L27 protein-like"/>
    <property type="match status" value="1"/>
</dbReference>
<dbReference type="PROSITE" id="PS00831">
    <property type="entry name" value="RIBOSOMAL_L27"/>
    <property type="match status" value="1"/>
</dbReference>
<feature type="chain" id="PRO_1000017539" description="Large ribosomal subunit protein bL27">
    <location>
        <begin position="1"/>
        <end position="88"/>
    </location>
</feature>
<evidence type="ECO:0000255" key="1">
    <source>
        <dbReference type="HAMAP-Rule" id="MF_00539"/>
    </source>
</evidence>
<evidence type="ECO:0000305" key="2"/>
<proteinExistence type="inferred from homology"/>
<protein>
    <recommendedName>
        <fullName evidence="1">Large ribosomal subunit protein bL27</fullName>
    </recommendedName>
    <alternativeName>
        <fullName evidence="2">50S ribosomal protein L27</fullName>
    </alternativeName>
</protein>
<name>RL27_PARD8</name>
<comment type="similarity">
    <text evidence="1">Belongs to the bacterial ribosomal protein bL27 family.</text>
</comment>